<protein>
    <recommendedName>
        <fullName evidence="1">Acetyl-coenzyme A synthetase 1</fullName>
        <shortName evidence="1">AcCoA synthetase 1</shortName>
        <shortName evidence="1">Acs 1</shortName>
        <ecNumber evidence="1">6.2.1.1</ecNumber>
    </recommendedName>
    <alternativeName>
        <fullName evidence="1">Acetate--CoA ligase 1</fullName>
    </alternativeName>
    <alternativeName>
        <fullName evidence="1">Acyl-activating enzyme 1</fullName>
    </alternativeName>
</protein>
<name>ACSA1_PSEAE</name>
<sequence>MSAASLYPVHPEAVARTFTDEATYKTMYQQSVVNPDGFWREQAQRIDWIKPFEKVKQTSFDDHHVDIKWFADGTLNVSHNCLDRHLAERGDQVAIIWEGDDPADHQEITYRQLHEQVCKFANALRGQDVHRGDVVTIYMPMIPEAVVAMLACTRIGAIHSVVFGGFSPEALAGRIIDCKSKVVITADEGVRGGKRTPLKANVDDALTNPETSSVQKIIVCKRTGAEIKWNQHRDVWYDDLMKVAGSTCAPKEMGAEDPLFILYTSGSTGKPKGVLHTTGGYLVYASLTHERVFDYRPGEVYWCTADIGWVTGHTYIVYGPLANGATTILFEGVPNYPDVTRVAKIIDKHKVNILYTAPTAIRAMMAEGKAAVAGADGSSLRLLGSVGEPINPEAWQWYYETVGQSRCPIVDTWWQTETGACLMTPLPGAHAMKPGSAAKPFFGVVPALVDNLGNLIEGAAEGNLVILDSWPGQARTLFGDHDRFVDTYFKTFKGMYFTGDGARRDEDGYYWITGRVDDVLNVSGHRMGTAEVESAMVAHPKVAEAAVVGMQHDIKGQGIYVYVTLNSGVEPSEALRQELKQWVRREIGPIATPDVIQWAPGLPKTRSGKIMRRILRKIAAAEYDTLGDISTLADPGVVQHLIETHRSMQAA</sequence>
<evidence type="ECO:0000255" key="1">
    <source>
        <dbReference type="HAMAP-Rule" id="MF_01123"/>
    </source>
</evidence>
<reference key="1">
    <citation type="journal article" date="2000" name="Nature">
        <title>Complete genome sequence of Pseudomonas aeruginosa PAO1, an opportunistic pathogen.</title>
        <authorList>
            <person name="Stover C.K."/>
            <person name="Pham X.-Q.T."/>
            <person name="Erwin A.L."/>
            <person name="Mizoguchi S.D."/>
            <person name="Warrener P."/>
            <person name="Hickey M.J."/>
            <person name="Brinkman F.S.L."/>
            <person name="Hufnagle W.O."/>
            <person name="Kowalik D.J."/>
            <person name="Lagrou M."/>
            <person name="Garber R.L."/>
            <person name="Goltry L."/>
            <person name="Tolentino E."/>
            <person name="Westbrock-Wadman S."/>
            <person name="Yuan Y."/>
            <person name="Brody L.L."/>
            <person name="Coulter S.N."/>
            <person name="Folger K.R."/>
            <person name="Kas A."/>
            <person name="Larbig K."/>
            <person name="Lim R.M."/>
            <person name="Smith K.A."/>
            <person name="Spencer D.H."/>
            <person name="Wong G.K.-S."/>
            <person name="Wu Z."/>
            <person name="Paulsen I.T."/>
            <person name="Reizer J."/>
            <person name="Saier M.H. Jr."/>
            <person name="Hancock R.E.W."/>
            <person name="Lory S."/>
            <person name="Olson M.V."/>
        </authorList>
    </citation>
    <scope>NUCLEOTIDE SEQUENCE [LARGE SCALE GENOMIC DNA]</scope>
    <source>
        <strain>ATCC 15692 / DSM 22644 / CIP 104116 / JCM 14847 / LMG 12228 / 1C / PRS 101 / PAO1</strain>
    </source>
</reference>
<accession>Q9I558</accession>
<dbReference type="EC" id="6.2.1.1" evidence="1"/>
<dbReference type="EMBL" id="AE004091">
    <property type="protein sequence ID" value="AAG04276.1"/>
    <property type="molecule type" value="Genomic_DNA"/>
</dbReference>
<dbReference type="PIR" id="D83534">
    <property type="entry name" value="D83534"/>
</dbReference>
<dbReference type="SMR" id="Q9I558"/>
<dbReference type="FunCoup" id="Q9I558">
    <property type="interactions" value="674"/>
</dbReference>
<dbReference type="STRING" id="208964.PA0887"/>
<dbReference type="PaxDb" id="208964-PA0887"/>
<dbReference type="KEGG" id="pae:PA0887"/>
<dbReference type="PATRIC" id="fig|208964.12.peg.922"/>
<dbReference type="PseudoCAP" id="PA0887"/>
<dbReference type="HOGENOM" id="CLU_000022_3_6_6"/>
<dbReference type="InParanoid" id="Q9I558"/>
<dbReference type="OrthoDB" id="9803968at2"/>
<dbReference type="PhylomeDB" id="Q9I558"/>
<dbReference type="BioCyc" id="PAER208964:G1FZ6-902-MONOMER"/>
<dbReference type="Proteomes" id="UP000002438">
    <property type="component" value="Chromosome"/>
</dbReference>
<dbReference type="GO" id="GO:0005829">
    <property type="term" value="C:cytosol"/>
    <property type="evidence" value="ECO:0000318"/>
    <property type="project" value="GO_Central"/>
</dbReference>
<dbReference type="GO" id="GO:0003987">
    <property type="term" value="F:acetate-CoA ligase activity"/>
    <property type="evidence" value="ECO:0000318"/>
    <property type="project" value="GO_Central"/>
</dbReference>
<dbReference type="GO" id="GO:0016208">
    <property type="term" value="F:AMP binding"/>
    <property type="evidence" value="ECO:0007669"/>
    <property type="project" value="InterPro"/>
</dbReference>
<dbReference type="GO" id="GO:0005524">
    <property type="term" value="F:ATP binding"/>
    <property type="evidence" value="ECO:0007669"/>
    <property type="project" value="UniProtKB-KW"/>
</dbReference>
<dbReference type="GO" id="GO:0046872">
    <property type="term" value="F:metal ion binding"/>
    <property type="evidence" value="ECO:0007669"/>
    <property type="project" value="UniProtKB-KW"/>
</dbReference>
<dbReference type="GO" id="GO:0006085">
    <property type="term" value="P:acetyl-CoA biosynthetic process"/>
    <property type="evidence" value="ECO:0000318"/>
    <property type="project" value="GO_Central"/>
</dbReference>
<dbReference type="GO" id="GO:0019427">
    <property type="term" value="P:acetyl-CoA biosynthetic process from acetate"/>
    <property type="evidence" value="ECO:0007669"/>
    <property type="project" value="InterPro"/>
</dbReference>
<dbReference type="CDD" id="cd05966">
    <property type="entry name" value="ACS"/>
    <property type="match status" value="1"/>
</dbReference>
<dbReference type="FunFam" id="3.30.300.30:FF:000004">
    <property type="entry name" value="Acetyl-coenzyme A synthetase"/>
    <property type="match status" value="1"/>
</dbReference>
<dbReference type="FunFam" id="3.40.50.12780:FF:000001">
    <property type="entry name" value="Acetyl-coenzyme A synthetase"/>
    <property type="match status" value="1"/>
</dbReference>
<dbReference type="Gene3D" id="3.30.300.30">
    <property type="match status" value="1"/>
</dbReference>
<dbReference type="Gene3D" id="3.40.50.12780">
    <property type="entry name" value="N-terminal domain of ligase-like"/>
    <property type="match status" value="1"/>
</dbReference>
<dbReference type="HAMAP" id="MF_01123">
    <property type="entry name" value="Ac_CoA_synth"/>
    <property type="match status" value="1"/>
</dbReference>
<dbReference type="InterPro" id="IPR011904">
    <property type="entry name" value="Ac_CoA_lig"/>
</dbReference>
<dbReference type="InterPro" id="IPR032387">
    <property type="entry name" value="ACAS_N"/>
</dbReference>
<dbReference type="InterPro" id="IPR025110">
    <property type="entry name" value="AMP-bd_C"/>
</dbReference>
<dbReference type="InterPro" id="IPR045851">
    <property type="entry name" value="AMP-bd_C_sf"/>
</dbReference>
<dbReference type="InterPro" id="IPR020845">
    <property type="entry name" value="AMP-binding_CS"/>
</dbReference>
<dbReference type="InterPro" id="IPR000873">
    <property type="entry name" value="AMP-dep_synth/lig_dom"/>
</dbReference>
<dbReference type="InterPro" id="IPR042099">
    <property type="entry name" value="ANL_N_sf"/>
</dbReference>
<dbReference type="NCBIfam" id="TIGR02188">
    <property type="entry name" value="Ac_CoA_lig_AcsA"/>
    <property type="match status" value="1"/>
</dbReference>
<dbReference type="NCBIfam" id="NF001208">
    <property type="entry name" value="PRK00174.1"/>
    <property type="match status" value="1"/>
</dbReference>
<dbReference type="PANTHER" id="PTHR24095">
    <property type="entry name" value="ACETYL-COENZYME A SYNTHETASE"/>
    <property type="match status" value="1"/>
</dbReference>
<dbReference type="PANTHER" id="PTHR24095:SF243">
    <property type="entry name" value="ACETYL-COENZYME A SYNTHETASE"/>
    <property type="match status" value="1"/>
</dbReference>
<dbReference type="Pfam" id="PF16177">
    <property type="entry name" value="ACAS_N"/>
    <property type="match status" value="1"/>
</dbReference>
<dbReference type="Pfam" id="PF00501">
    <property type="entry name" value="AMP-binding"/>
    <property type="match status" value="1"/>
</dbReference>
<dbReference type="Pfam" id="PF13193">
    <property type="entry name" value="AMP-binding_C"/>
    <property type="match status" value="1"/>
</dbReference>
<dbReference type="SUPFAM" id="SSF56801">
    <property type="entry name" value="Acetyl-CoA synthetase-like"/>
    <property type="match status" value="1"/>
</dbReference>
<dbReference type="PROSITE" id="PS00455">
    <property type="entry name" value="AMP_BINDING"/>
    <property type="match status" value="1"/>
</dbReference>
<proteinExistence type="inferred from homology"/>
<gene>
    <name evidence="1" type="primary">acsA1</name>
    <name type="ordered locus">PA0887</name>
</gene>
<feature type="chain" id="PRO_0000208374" description="Acetyl-coenzyme A synthetase 1">
    <location>
        <begin position="1"/>
        <end position="651"/>
    </location>
</feature>
<feature type="binding site" evidence="1">
    <location>
        <begin position="191"/>
        <end position="194"/>
    </location>
    <ligand>
        <name>CoA</name>
        <dbReference type="ChEBI" id="CHEBI:57287"/>
    </ligand>
</feature>
<feature type="binding site" evidence="1">
    <location>
        <position position="311"/>
    </location>
    <ligand>
        <name>CoA</name>
        <dbReference type="ChEBI" id="CHEBI:57287"/>
    </ligand>
</feature>
<feature type="binding site" evidence="1">
    <location>
        <position position="335"/>
    </location>
    <ligand>
        <name>CoA</name>
        <dbReference type="ChEBI" id="CHEBI:57287"/>
    </ligand>
</feature>
<feature type="binding site" evidence="1">
    <location>
        <begin position="387"/>
        <end position="389"/>
    </location>
    <ligand>
        <name>ATP</name>
        <dbReference type="ChEBI" id="CHEBI:30616"/>
    </ligand>
</feature>
<feature type="binding site" evidence="1">
    <location>
        <begin position="411"/>
        <end position="416"/>
    </location>
    <ligand>
        <name>ATP</name>
        <dbReference type="ChEBI" id="CHEBI:30616"/>
    </ligand>
</feature>
<feature type="binding site" evidence="1">
    <location>
        <position position="500"/>
    </location>
    <ligand>
        <name>ATP</name>
        <dbReference type="ChEBI" id="CHEBI:30616"/>
    </ligand>
</feature>
<feature type="binding site" evidence="1">
    <location>
        <position position="515"/>
    </location>
    <ligand>
        <name>ATP</name>
        <dbReference type="ChEBI" id="CHEBI:30616"/>
    </ligand>
</feature>
<feature type="binding site" evidence="1">
    <location>
        <position position="523"/>
    </location>
    <ligand>
        <name>CoA</name>
        <dbReference type="ChEBI" id="CHEBI:57287"/>
    </ligand>
</feature>
<feature type="binding site" evidence="1">
    <location>
        <position position="526"/>
    </location>
    <ligand>
        <name>ATP</name>
        <dbReference type="ChEBI" id="CHEBI:30616"/>
    </ligand>
</feature>
<feature type="binding site" evidence="1">
    <location>
        <position position="537"/>
    </location>
    <ligand>
        <name>Mg(2+)</name>
        <dbReference type="ChEBI" id="CHEBI:18420"/>
    </ligand>
</feature>
<feature type="binding site" evidence="1">
    <location>
        <position position="539"/>
    </location>
    <ligand>
        <name>Mg(2+)</name>
        <dbReference type="ChEBI" id="CHEBI:18420"/>
    </ligand>
</feature>
<feature type="binding site" evidence="1">
    <location>
        <position position="542"/>
    </location>
    <ligand>
        <name>Mg(2+)</name>
        <dbReference type="ChEBI" id="CHEBI:18420"/>
    </ligand>
</feature>
<feature type="binding site" evidence="1">
    <location>
        <position position="584"/>
    </location>
    <ligand>
        <name>CoA</name>
        <dbReference type="ChEBI" id="CHEBI:57287"/>
    </ligand>
</feature>
<feature type="modified residue" description="N6-acetyllysine" evidence="1">
    <location>
        <position position="609"/>
    </location>
</feature>
<organism>
    <name type="scientific">Pseudomonas aeruginosa (strain ATCC 15692 / DSM 22644 / CIP 104116 / JCM 14847 / LMG 12228 / 1C / PRS 101 / PAO1)</name>
    <dbReference type="NCBI Taxonomy" id="208964"/>
    <lineage>
        <taxon>Bacteria</taxon>
        <taxon>Pseudomonadati</taxon>
        <taxon>Pseudomonadota</taxon>
        <taxon>Gammaproteobacteria</taxon>
        <taxon>Pseudomonadales</taxon>
        <taxon>Pseudomonadaceae</taxon>
        <taxon>Pseudomonas</taxon>
    </lineage>
</organism>
<comment type="function">
    <text evidence="1">Catalyzes the conversion of acetate into acetyl-CoA (AcCoA), an essential intermediate at the junction of anabolic and catabolic pathways. AcsA undergoes a two-step reaction. In the first half reaction, AcsA combines acetate with ATP to form acetyl-adenylate (AcAMP) intermediate. In the second half reaction, it can then transfer the acetyl group from AcAMP to the sulfhydryl group of CoA, forming the product AcCoA.</text>
</comment>
<comment type="catalytic activity">
    <reaction evidence="1">
        <text>acetate + ATP + CoA = acetyl-CoA + AMP + diphosphate</text>
        <dbReference type="Rhea" id="RHEA:23176"/>
        <dbReference type="ChEBI" id="CHEBI:30089"/>
        <dbReference type="ChEBI" id="CHEBI:30616"/>
        <dbReference type="ChEBI" id="CHEBI:33019"/>
        <dbReference type="ChEBI" id="CHEBI:57287"/>
        <dbReference type="ChEBI" id="CHEBI:57288"/>
        <dbReference type="ChEBI" id="CHEBI:456215"/>
        <dbReference type="EC" id="6.2.1.1"/>
    </reaction>
</comment>
<comment type="cofactor">
    <cofactor evidence="1">
        <name>Mg(2+)</name>
        <dbReference type="ChEBI" id="CHEBI:18420"/>
    </cofactor>
</comment>
<comment type="PTM">
    <text evidence="1">Acetylated. Deacetylation by the SIR2-homolog deacetylase activates the enzyme.</text>
</comment>
<comment type="similarity">
    <text evidence="1">Belongs to the ATP-dependent AMP-binding enzyme family.</text>
</comment>
<keyword id="KW-0007">Acetylation</keyword>
<keyword id="KW-0067">ATP-binding</keyword>
<keyword id="KW-0436">Ligase</keyword>
<keyword id="KW-0460">Magnesium</keyword>
<keyword id="KW-0479">Metal-binding</keyword>
<keyword id="KW-0547">Nucleotide-binding</keyword>
<keyword id="KW-1185">Reference proteome</keyword>